<sequence length="173" mass="19898">MDITIQHPWFKRALGPLIPSRLFDQFFGEGLFEYDLLPLFSSTISPYYRQSLFRTVLESGISEVRSDRDKFTIFLDVKHFSPEDLSVKVIEDFVEIHGKHNERQDDHGYISREFHRRYRLPSNVDQAAITCSLSADGMLTFAAPKVQSNTDPSHNERPIPVSREEKPTSAPPS</sequence>
<name>CRYAA_TUPTE</name>
<accession>P02506</accession>
<gene>
    <name type="primary">CRYAA</name>
</gene>
<proteinExistence type="evidence at protein level"/>
<evidence type="ECO:0000250" key="1"/>
<evidence type="ECO:0000250" key="2">
    <source>
        <dbReference type="UniProtKB" id="P02470"/>
    </source>
</evidence>
<evidence type="ECO:0000250" key="3">
    <source>
        <dbReference type="UniProtKB" id="P02489"/>
    </source>
</evidence>
<evidence type="ECO:0000255" key="4">
    <source>
        <dbReference type="PROSITE-ProRule" id="PRU00285"/>
    </source>
</evidence>
<evidence type="ECO:0000256" key="5">
    <source>
        <dbReference type="SAM" id="MobiDB-lite"/>
    </source>
</evidence>
<evidence type="ECO:0000269" key="6">
    <source>
    </source>
</evidence>
<feature type="chain" id="PRO_0000125899" description="Alpha-crystallin A chain">
    <location>
        <begin position="1"/>
        <end position="173"/>
    </location>
</feature>
<feature type="domain" description="sHSP" evidence="4">
    <location>
        <begin position="52"/>
        <end position="162"/>
    </location>
</feature>
<feature type="region of interest" description="Disordered" evidence="5">
    <location>
        <begin position="144"/>
        <end position="173"/>
    </location>
</feature>
<feature type="compositionally biased region" description="Basic and acidic residues" evidence="5">
    <location>
        <begin position="153"/>
        <end position="167"/>
    </location>
</feature>
<feature type="binding site" evidence="2">
    <location>
        <position position="100"/>
    </location>
    <ligand>
        <name>Zn(2+)</name>
        <dbReference type="ChEBI" id="CHEBI:29105"/>
        <label>1</label>
    </ligand>
</feature>
<feature type="binding site" evidence="2">
    <location>
        <position position="102"/>
    </location>
    <ligand>
        <name>Zn(2+)</name>
        <dbReference type="ChEBI" id="CHEBI:29105"/>
        <label>1</label>
    </ligand>
</feature>
<feature type="binding site" evidence="2">
    <location>
        <position position="107"/>
    </location>
    <ligand>
        <name>Zn(2+)</name>
        <dbReference type="ChEBI" id="CHEBI:29105"/>
        <label>2</label>
    </ligand>
</feature>
<feature type="binding site" evidence="2">
    <location>
        <position position="154"/>
    </location>
    <ligand>
        <name>Zn(2+)</name>
        <dbReference type="ChEBI" id="CHEBI:29105"/>
        <label>3</label>
    </ligand>
</feature>
<feature type="modified residue" description="N-acetylmethionine" evidence="6">
    <location>
        <position position="1"/>
    </location>
</feature>
<feature type="glycosylation site" description="O-linked (GlcNAc) serine" evidence="1">
    <location>
        <position position="162"/>
    </location>
</feature>
<keyword id="KW-0007">Acetylation</keyword>
<keyword id="KW-0963">Cytoplasm</keyword>
<keyword id="KW-0903">Direct protein sequencing</keyword>
<keyword id="KW-0273">Eye lens protein</keyword>
<keyword id="KW-0325">Glycoprotein</keyword>
<keyword id="KW-0479">Metal-binding</keyword>
<keyword id="KW-0539">Nucleus</keyword>
<keyword id="KW-0862">Zinc</keyword>
<protein>
    <recommendedName>
        <fullName>Alpha-crystallin A chain</fullName>
    </recommendedName>
</protein>
<dbReference type="PIR" id="B25753">
    <property type="entry name" value="CYLZAA"/>
</dbReference>
<dbReference type="SMR" id="P02506"/>
<dbReference type="GlyCosmos" id="P02506">
    <property type="glycosylation" value="1 site, No reported glycans"/>
</dbReference>
<dbReference type="iPTMnet" id="P02506"/>
<dbReference type="GO" id="GO:0005737">
    <property type="term" value="C:cytoplasm"/>
    <property type="evidence" value="ECO:0007669"/>
    <property type="project" value="UniProtKB-SubCell"/>
</dbReference>
<dbReference type="GO" id="GO:0005634">
    <property type="term" value="C:nucleus"/>
    <property type="evidence" value="ECO:0007669"/>
    <property type="project" value="UniProtKB-SubCell"/>
</dbReference>
<dbReference type="GO" id="GO:0046872">
    <property type="term" value="F:metal ion binding"/>
    <property type="evidence" value="ECO:0007669"/>
    <property type="project" value="UniProtKB-KW"/>
</dbReference>
<dbReference type="GO" id="GO:0005212">
    <property type="term" value="F:structural constituent of eye lens"/>
    <property type="evidence" value="ECO:0007669"/>
    <property type="project" value="UniProtKB-KW"/>
</dbReference>
<dbReference type="GO" id="GO:0051082">
    <property type="term" value="F:unfolded protein binding"/>
    <property type="evidence" value="ECO:0007669"/>
    <property type="project" value="TreeGrafter"/>
</dbReference>
<dbReference type="GO" id="GO:0002088">
    <property type="term" value="P:lens development in camera-type eye"/>
    <property type="evidence" value="ECO:0007669"/>
    <property type="project" value="TreeGrafter"/>
</dbReference>
<dbReference type="GO" id="GO:0043066">
    <property type="term" value="P:negative regulation of apoptotic process"/>
    <property type="evidence" value="ECO:0007669"/>
    <property type="project" value="TreeGrafter"/>
</dbReference>
<dbReference type="GO" id="GO:0042026">
    <property type="term" value="P:protein refolding"/>
    <property type="evidence" value="ECO:0007669"/>
    <property type="project" value="TreeGrafter"/>
</dbReference>
<dbReference type="GO" id="GO:0009408">
    <property type="term" value="P:response to heat"/>
    <property type="evidence" value="ECO:0007669"/>
    <property type="project" value="TreeGrafter"/>
</dbReference>
<dbReference type="CDD" id="cd06497">
    <property type="entry name" value="ACD_alphaA-crystallin_HspB4"/>
    <property type="match status" value="1"/>
</dbReference>
<dbReference type="FunFam" id="2.60.40.790:FF:000008">
    <property type="entry name" value="Alpha-crystallin A chain"/>
    <property type="match status" value="1"/>
</dbReference>
<dbReference type="Gene3D" id="2.60.40.790">
    <property type="match status" value="1"/>
</dbReference>
<dbReference type="InterPro" id="IPR002068">
    <property type="entry name" value="A-crystallin/Hsp20_dom"/>
</dbReference>
<dbReference type="InterPro" id="IPR055269">
    <property type="entry name" value="Alpha-crystallin/HSP_16"/>
</dbReference>
<dbReference type="InterPro" id="IPR001436">
    <property type="entry name" value="Alpha-crystallin/sHSP_animal"/>
</dbReference>
<dbReference type="InterPro" id="IPR003090">
    <property type="entry name" value="Alpha-crystallin_N"/>
</dbReference>
<dbReference type="InterPro" id="IPR008978">
    <property type="entry name" value="HSP20-like_chaperone"/>
</dbReference>
<dbReference type="PANTHER" id="PTHR45640:SF14">
    <property type="entry name" value="ALPHA-CRYSTALLIN A CHAIN"/>
    <property type="match status" value="1"/>
</dbReference>
<dbReference type="PANTHER" id="PTHR45640">
    <property type="entry name" value="HEAT SHOCK PROTEIN HSP-12.2-RELATED"/>
    <property type="match status" value="1"/>
</dbReference>
<dbReference type="Pfam" id="PF00525">
    <property type="entry name" value="Crystallin"/>
    <property type="match status" value="1"/>
</dbReference>
<dbReference type="Pfam" id="PF00011">
    <property type="entry name" value="HSP20"/>
    <property type="match status" value="1"/>
</dbReference>
<dbReference type="PIRSF" id="PIRSF036514">
    <property type="entry name" value="Sm_HSP_B1"/>
    <property type="match status" value="1"/>
</dbReference>
<dbReference type="PRINTS" id="PR00299">
    <property type="entry name" value="ACRYSTALLIN"/>
</dbReference>
<dbReference type="SUPFAM" id="SSF49764">
    <property type="entry name" value="HSP20-like chaperones"/>
    <property type="match status" value="1"/>
</dbReference>
<dbReference type="PROSITE" id="PS01031">
    <property type="entry name" value="SHSP"/>
    <property type="match status" value="1"/>
</dbReference>
<comment type="function">
    <text evidence="3">Contributes to the transparency and refractive index of the lens. May act as a chaperone, preventing aggregation of various proteins under a wide range of stress conditions.</text>
</comment>
<comment type="subunit">
    <text evidence="2 3">Heteropolymer composed of three CRYAA and one CRYAB subunits (By similarity). Inter-subunit bridging via zinc ions enhances stability, which is crucial as there is no protein turn over in the lens. Can also form homodimers and homotetramers (dimers of dimers) which serve as the building blocks of homooligomers (By similarity). Within homooligomers, the zinc-binding motif is created from residues of 3 different molecules. His-100 and Glu-102 from one molecule are ligands of the zinc ion, and His-107 and His-154 residues from additional molecules complete the site with tetrahedral coordination geometry (By similarity).</text>
</comment>
<comment type="subcellular location">
    <subcellularLocation>
        <location evidence="3">Cytoplasm</location>
    </subcellularLocation>
    <subcellularLocation>
        <location evidence="3">Nucleus</location>
    </subcellularLocation>
    <text evidence="3">Translocates to the nucleus during heat shock.</text>
</comment>
<comment type="similarity">
    <text evidence="4">Belongs to the small heat shock protein (HSP20) family.</text>
</comment>
<reference key="1">
    <citation type="journal article" date="1985" name="Mol. Biol. Evol.">
        <title>Alpha-crystallin A sequences of Alligator mississippiensis and the lizard Tupinambis teguixin: molecular evolution and reptilian phylogeny.</title>
        <authorList>
            <person name="de Jong W.W."/>
            <person name="Zweers A."/>
            <person name="Versteeg M."/>
            <person name="Dessauer H.C."/>
            <person name="Goodman M."/>
        </authorList>
    </citation>
    <scope>AMINO-ACID COMPOSITION OF PEPTIDES</scope>
    <scope>PARTIAL PROTEIN SEQUENCE</scope>
    <scope>ACETYLATION AT MET-1</scope>
</reference>
<organism>
    <name type="scientific">Tupinambis teguixin</name>
    <name type="common">Golden tegu</name>
    <dbReference type="NCBI Taxonomy" id="8532"/>
    <lineage>
        <taxon>Eukaryota</taxon>
        <taxon>Metazoa</taxon>
        <taxon>Chordata</taxon>
        <taxon>Craniata</taxon>
        <taxon>Vertebrata</taxon>
        <taxon>Euteleostomi</taxon>
        <taxon>Lepidosauria</taxon>
        <taxon>Squamata</taxon>
        <taxon>Bifurcata</taxon>
        <taxon>Unidentata</taxon>
        <taxon>Episquamata</taxon>
        <taxon>Laterata</taxon>
        <taxon>Teiioidea</taxon>
        <taxon>Teiidae</taxon>
        <taxon>Tupinambis</taxon>
    </lineage>
</organism>